<proteinExistence type="inferred from homology"/>
<comment type="function">
    <text evidence="2">GTP hydrolase that promotes the GTP-dependent binding of aminoacyl-tRNA to the A-site of ribosomes during protein biosynthesis.</text>
</comment>
<comment type="catalytic activity">
    <reaction evidence="2">
        <text>GTP + H2O = GDP + phosphate + H(+)</text>
        <dbReference type="Rhea" id="RHEA:19669"/>
        <dbReference type="ChEBI" id="CHEBI:15377"/>
        <dbReference type="ChEBI" id="CHEBI:15378"/>
        <dbReference type="ChEBI" id="CHEBI:37565"/>
        <dbReference type="ChEBI" id="CHEBI:43474"/>
        <dbReference type="ChEBI" id="CHEBI:58189"/>
        <dbReference type="EC" id="3.6.5.3"/>
    </reaction>
    <physiologicalReaction direction="left-to-right" evidence="2">
        <dbReference type="Rhea" id="RHEA:19670"/>
    </physiologicalReaction>
</comment>
<comment type="subcellular location">
    <subcellularLocation>
        <location evidence="2">Cytoplasm</location>
    </subcellularLocation>
</comment>
<comment type="similarity">
    <text evidence="2">Belongs to the TRAFAC class translation factor GTPase superfamily. Classic translation factor GTPase family. EF-Tu/EF-1A subfamily.</text>
</comment>
<evidence type="ECO:0000250" key="1"/>
<evidence type="ECO:0000255" key="2">
    <source>
        <dbReference type="HAMAP-Rule" id="MF_00118"/>
    </source>
</evidence>
<organism>
    <name type="scientific">Sulfolobus acidocaldarius (strain ATCC 33909 / DSM 639 / JCM 8929 / NBRC 15157 / NCIMB 11770)</name>
    <dbReference type="NCBI Taxonomy" id="330779"/>
    <lineage>
        <taxon>Archaea</taxon>
        <taxon>Thermoproteota</taxon>
        <taxon>Thermoprotei</taxon>
        <taxon>Sulfolobales</taxon>
        <taxon>Sulfolobaceae</taxon>
        <taxon>Sulfolobus</taxon>
    </lineage>
</organism>
<accession>P17196</accession>
<accession>Q4JAW4</accession>
<gene>
    <name evidence="2" type="primary">tuf</name>
    <name type="ordered locus">Saci_0685</name>
</gene>
<dbReference type="EC" id="3.6.5.3" evidence="2"/>
<dbReference type="EMBL" id="X52382">
    <property type="protein sequence ID" value="CAA36608.1"/>
    <property type="molecule type" value="Genomic_DNA"/>
</dbReference>
<dbReference type="EMBL" id="CP000077">
    <property type="protein sequence ID" value="AAY80065.1"/>
    <property type="molecule type" value="Genomic_DNA"/>
</dbReference>
<dbReference type="PIR" id="S12818">
    <property type="entry name" value="EFUC1A"/>
</dbReference>
<dbReference type="RefSeq" id="WP_011277567.1">
    <property type="nucleotide sequence ID" value="NC_007181.1"/>
</dbReference>
<dbReference type="SMR" id="P17196"/>
<dbReference type="STRING" id="330779.Saci_0685"/>
<dbReference type="GeneID" id="14548893"/>
<dbReference type="GeneID" id="78441027"/>
<dbReference type="KEGG" id="sai:Saci_0685"/>
<dbReference type="PATRIC" id="fig|330779.12.peg.653"/>
<dbReference type="eggNOG" id="arCOG01561">
    <property type="taxonomic scope" value="Archaea"/>
</dbReference>
<dbReference type="HOGENOM" id="CLU_007265_3_5_2"/>
<dbReference type="Proteomes" id="UP000001018">
    <property type="component" value="Chromosome"/>
</dbReference>
<dbReference type="GO" id="GO:0005737">
    <property type="term" value="C:cytoplasm"/>
    <property type="evidence" value="ECO:0007669"/>
    <property type="project" value="UniProtKB-SubCell"/>
</dbReference>
<dbReference type="GO" id="GO:0005525">
    <property type="term" value="F:GTP binding"/>
    <property type="evidence" value="ECO:0007669"/>
    <property type="project" value="UniProtKB-UniRule"/>
</dbReference>
<dbReference type="GO" id="GO:0003924">
    <property type="term" value="F:GTPase activity"/>
    <property type="evidence" value="ECO:0007669"/>
    <property type="project" value="InterPro"/>
</dbReference>
<dbReference type="GO" id="GO:0003746">
    <property type="term" value="F:translation elongation factor activity"/>
    <property type="evidence" value="ECO:0007669"/>
    <property type="project" value="UniProtKB-UniRule"/>
</dbReference>
<dbReference type="CDD" id="cd01883">
    <property type="entry name" value="EF1_alpha"/>
    <property type="match status" value="1"/>
</dbReference>
<dbReference type="CDD" id="cd03693">
    <property type="entry name" value="EF1_alpha_II"/>
    <property type="match status" value="1"/>
</dbReference>
<dbReference type="CDD" id="cd03705">
    <property type="entry name" value="EF1_alpha_III"/>
    <property type="match status" value="1"/>
</dbReference>
<dbReference type="FunFam" id="2.40.30.10:FF:000003">
    <property type="entry name" value="Elongation factor 1-alpha"/>
    <property type="match status" value="1"/>
</dbReference>
<dbReference type="FunFam" id="2.40.30.10:FF:000005">
    <property type="entry name" value="Elongation factor 1-alpha"/>
    <property type="match status" value="1"/>
</dbReference>
<dbReference type="FunFam" id="3.40.50.300:FF:000255">
    <property type="entry name" value="Elongation factor 1-alpha"/>
    <property type="match status" value="1"/>
</dbReference>
<dbReference type="Gene3D" id="3.40.50.300">
    <property type="entry name" value="P-loop containing nucleotide triphosphate hydrolases"/>
    <property type="match status" value="1"/>
</dbReference>
<dbReference type="Gene3D" id="2.40.30.10">
    <property type="entry name" value="Translation factors"/>
    <property type="match status" value="2"/>
</dbReference>
<dbReference type="HAMAP" id="MF_00118_A">
    <property type="entry name" value="EF_Tu_A"/>
    <property type="match status" value="1"/>
</dbReference>
<dbReference type="InterPro" id="IPR004161">
    <property type="entry name" value="EFTu-like_2"/>
</dbReference>
<dbReference type="InterPro" id="IPR031157">
    <property type="entry name" value="G_TR_CS"/>
</dbReference>
<dbReference type="InterPro" id="IPR054696">
    <property type="entry name" value="GTP-eEF1A_C"/>
</dbReference>
<dbReference type="InterPro" id="IPR027417">
    <property type="entry name" value="P-loop_NTPase"/>
</dbReference>
<dbReference type="InterPro" id="IPR005225">
    <property type="entry name" value="Small_GTP-bd"/>
</dbReference>
<dbReference type="InterPro" id="IPR000795">
    <property type="entry name" value="T_Tr_GTP-bd_dom"/>
</dbReference>
<dbReference type="InterPro" id="IPR050100">
    <property type="entry name" value="TRAFAC_GTPase_members"/>
</dbReference>
<dbReference type="InterPro" id="IPR009000">
    <property type="entry name" value="Transl_B-barrel_sf"/>
</dbReference>
<dbReference type="InterPro" id="IPR009001">
    <property type="entry name" value="Transl_elong_EF1A/Init_IF2_C"/>
</dbReference>
<dbReference type="InterPro" id="IPR004539">
    <property type="entry name" value="Transl_elong_EF1A_euk/arc"/>
</dbReference>
<dbReference type="NCBIfam" id="TIGR00483">
    <property type="entry name" value="EF-1_alpha"/>
    <property type="match status" value="1"/>
</dbReference>
<dbReference type="NCBIfam" id="NF008969">
    <property type="entry name" value="PRK12317.1"/>
    <property type="match status" value="1"/>
</dbReference>
<dbReference type="NCBIfam" id="TIGR00231">
    <property type="entry name" value="small_GTP"/>
    <property type="match status" value="1"/>
</dbReference>
<dbReference type="PANTHER" id="PTHR23115">
    <property type="entry name" value="TRANSLATION FACTOR"/>
    <property type="match status" value="1"/>
</dbReference>
<dbReference type="Pfam" id="PF22594">
    <property type="entry name" value="GTP-eEF1A_C"/>
    <property type="match status" value="1"/>
</dbReference>
<dbReference type="Pfam" id="PF00009">
    <property type="entry name" value="GTP_EFTU"/>
    <property type="match status" value="1"/>
</dbReference>
<dbReference type="Pfam" id="PF03144">
    <property type="entry name" value="GTP_EFTU_D2"/>
    <property type="match status" value="1"/>
</dbReference>
<dbReference type="PRINTS" id="PR00315">
    <property type="entry name" value="ELONGATNFCT"/>
</dbReference>
<dbReference type="SUPFAM" id="SSF50465">
    <property type="entry name" value="EF-Tu/eEF-1alpha/eIF2-gamma C-terminal domain"/>
    <property type="match status" value="1"/>
</dbReference>
<dbReference type="SUPFAM" id="SSF52540">
    <property type="entry name" value="P-loop containing nucleoside triphosphate hydrolases"/>
    <property type="match status" value="1"/>
</dbReference>
<dbReference type="SUPFAM" id="SSF50447">
    <property type="entry name" value="Translation proteins"/>
    <property type="match status" value="1"/>
</dbReference>
<dbReference type="PROSITE" id="PS00301">
    <property type="entry name" value="G_TR_1"/>
    <property type="match status" value="1"/>
</dbReference>
<dbReference type="PROSITE" id="PS51722">
    <property type="entry name" value="G_TR_2"/>
    <property type="match status" value="1"/>
</dbReference>
<sequence length="435" mass="48200">MSQKPHLNLIVIGHVDHGKSTLIGRLLMDRGFIDEKTVKEAEEAAKKLGKDSEKYAFLMDRLKEERERGVTINLSFMRFETRKYFFTVIDAPGHRDFVKNMITGASQADAAILVVSAKKGEYEAGMSAEGQTREHIILSKTMGINQVIVAINKMDLADTPYDEKRFKEIVDTVSKFMKSFGFDMNKVKFVPVVAPDGDNVTHKSTKMPWYNGPTLEELLDQLEIPPKPVDKPLRIPIQEVYSISGVGVVPVGRIESGVLKVGDKIVFMPVGKIGEVRSIETHHTKIDKAEPGDNIGFNVRGVEKKDVKRGDVAGSVQNPPTVADEFTAQVIVIWHPTAVGVGYTPVLHVHTASIACRVSEITSRIDPKTGKEAEKNPQFIKAGDSAIVKFKPIKELVAEKFREFPALGRFAMRDMGKTVGVGVIIDVKPRKVEVK</sequence>
<name>EF1A_SULAC</name>
<reference key="1">
    <citation type="journal article" date="1991" name="Syst. Appl. Microbiol.">
        <title>Organisation and nucleotide sequence of a gene cluster comprising the translation elongation factor 1-alpha from the extreme thermophilic archaebacterium Sulfolobus acidocaldarius: phylogenetic implications.</title>
        <authorList>
            <person name="Auer J."/>
            <person name="Spicker G."/>
            <person name="Mayerhofer L."/>
            <person name="Puehler G."/>
            <person name="Boeck A."/>
        </authorList>
    </citation>
    <scope>NUCLEOTIDE SEQUENCE [GENOMIC DNA]</scope>
    <source>
        <strain>ATCC 33909 / DSM 639 / JCM 8929 / NBRC 15157 / NCIMB 11770</strain>
    </source>
</reference>
<reference key="2">
    <citation type="journal article" date="2005" name="J. Bacteriol.">
        <title>The genome of Sulfolobus acidocaldarius, a model organism of the Crenarchaeota.</title>
        <authorList>
            <person name="Chen L."/>
            <person name="Bruegger K."/>
            <person name="Skovgaard M."/>
            <person name="Redder P."/>
            <person name="She Q."/>
            <person name="Torarinsson E."/>
            <person name="Greve B."/>
            <person name="Awayez M."/>
            <person name="Zibat A."/>
            <person name="Klenk H.-P."/>
            <person name="Garrett R.A."/>
        </authorList>
    </citation>
    <scope>NUCLEOTIDE SEQUENCE [LARGE SCALE GENOMIC DNA]</scope>
    <source>
        <strain>ATCC 33909 / DSM 639 / JCM 8929 / NBRC 15157 / NCIMB 11770</strain>
    </source>
</reference>
<feature type="chain" id="PRO_0000090993" description="Elongation factor 1-alpha">
    <location>
        <begin position="1"/>
        <end position="435"/>
    </location>
</feature>
<feature type="domain" description="tr-type G">
    <location>
        <begin position="4"/>
        <end position="229"/>
    </location>
</feature>
<feature type="region of interest" description="G1" evidence="1">
    <location>
        <begin position="13"/>
        <end position="20"/>
    </location>
</feature>
<feature type="region of interest" description="G2" evidence="1">
    <location>
        <begin position="69"/>
        <end position="73"/>
    </location>
</feature>
<feature type="region of interest" description="G3" evidence="1">
    <location>
        <begin position="90"/>
        <end position="93"/>
    </location>
</feature>
<feature type="region of interest" description="G4" evidence="1">
    <location>
        <begin position="152"/>
        <end position="155"/>
    </location>
</feature>
<feature type="region of interest" description="G5" evidence="1">
    <location>
        <begin position="193"/>
        <end position="195"/>
    </location>
</feature>
<feature type="binding site" evidence="2">
    <location>
        <begin position="13"/>
        <end position="20"/>
    </location>
    <ligand>
        <name>GTP</name>
        <dbReference type="ChEBI" id="CHEBI:37565"/>
    </ligand>
</feature>
<feature type="binding site" evidence="2">
    <location>
        <position position="20"/>
    </location>
    <ligand>
        <name>Mg(2+)</name>
        <dbReference type="ChEBI" id="CHEBI:18420"/>
    </ligand>
</feature>
<feature type="binding site" evidence="2">
    <location>
        <begin position="90"/>
        <end position="94"/>
    </location>
    <ligand>
        <name>GTP</name>
        <dbReference type="ChEBI" id="CHEBI:37565"/>
    </ligand>
</feature>
<feature type="binding site" evidence="2">
    <location>
        <begin position="152"/>
        <end position="155"/>
    </location>
    <ligand>
        <name>GTP</name>
        <dbReference type="ChEBI" id="CHEBI:37565"/>
    </ligand>
</feature>
<protein>
    <recommendedName>
        <fullName evidence="2">Elongation factor 1-alpha</fullName>
        <shortName evidence="2">EF-1-alpha</shortName>
        <ecNumber evidence="2">3.6.5.3</ecNumber>
    </recommendedName>
    <alternativeName>
        <fullName evidence="2">Elongation factor Tu</fullName>
        <shortName evidence="2">EF-Tu</shortName>
    </alternativeName>
</protein>
<keyword id="KW-0963">Cytoplasm</keyword>
<keyword id="KW-0251">Elongation factor</keyword>
<keyword id="KW-0342">GTP-binding</keyword>
<keyword id="KW-0378">Hydrolase</keyword>
<keyword id="KW-0460">Magnesium</keyword>
<keyword id="KW-0479">Metal-binding</keyword>
<keyword id="KW-0547">Nucleotide-binding</keyword>
<keyword id="KW-0648">Protein biosynthesis</keyword>
<keyword id="KW-1185">Reference proteome</keyword>